<organism>
    <name type="scientific">Rattus norvegicus</name>
    <name type="common">Rat</name>
    <dbReference type="NCBI Taxonomy" id="10116"/>
    <lineage>
        <taxon>Eukaryota</taxon>
        <taxon>Metazoa</taxon>
        <taxon>Chordata</taxon>
        <taxon>Craniata</taxon>
        <taxon>Vertebrata</taxon>
        <taxon>Euteleostomi</taxon>
        <taxon>Mammalia</taxon>
        <taxon>Eutheria</taxon>
        <taxon>Euarchontoglires</taxon>
        <taxon>Glires</taxon>
        <taxon>Rodentia</taxon>
        <taxon>Myomorpha</taxon>
        <taxon>Muroidea</taxon>
        <taxon>Muridae</taxon>
        <taxon>Murinae</taxon>
        <taxon>Rattus</taxon>
    </lineage>
</organism>
<dbReference type="EMBL" id="L31622">
    <property type="protein sequence ID" value="AAC78724.1"/>
    <property type="molecule type" value="mRNA"/>
</dbReference>
<dbReference type="EMBL" id="AY574258">
    <property type="protein sequence ID" value="AAS90354.1"/>
    <property type="molecule type" value="mRNA"/>
</dbReference>
<dbReference type="PIR" id="JH0174">
    <property type="entry name" value="JH0174"/>
</dbReference>
<dbReference type="RefSeq" id="NP_062170.1">
    <property type="nucleotide sequence ID" value="NM_019297.2"/>
</dbReference>
<dbReference type="SMR" id="P12390"/>
<dbReference type="ComplexPortal" id="CPX-170">
    <property type="entry name" value="Neuronal nicotinic acetylcholine receptor complex, 2xalpha4-3xbeta2"/>
</dbReference>
<dbReference type="ComplexPortal" id="CPX-171">
    <property type="entry name" value="Neuronal nicotinic acetylcholine receptor complex, 3xalpha4-2xbeta2"/>
</dbReference>
<dbReference type="ComplexPortal" id="CPX-178">
    <property type="entry name" value="Neuronal nicotinic acetylcholine receptor complex, alpha2-beta2"/>
</dbReference>
<dbReference type="ComplexPortal" id="CPX-190">
    <property type="entry name" value="Neuronal nicotinic acetylcholine receptor complex, alpha3-alpha5-beta2"/>
</dbReference>
<dbReference type="ComplexPortal" id="CPX-191">
    <property type="entry name" value="Neuronal nicotinic acetylcholine receptor complex, alpha3-beta2"/>
</dbReference>
<dbReference type="ComplexPortal" id="CPX-203">
    <property type="entry name" value="Neuronal nicotinic acetylcholine receptor complex, alpha3-alpha6-beta2-beta3"/>
</dbReference>
<dbReference type="ComplexPortal" id="CPX-215">
    <property type="entry name" value="Neuronal nicotinic acetylcholine receptor complex, alpha4-alpha5-beta2"/>
</dbReference>
<dbReference type="ComplexPortal" id="CPX-237">
    <property type="entry name" value="Neuronal nicotinic acetylcholine receptor complex, alpha7-beta2"/>
</dbReference>
<dbReference type="CORUM" id="P12390"/>
<dbReference type="FunCoup" id="P12390">
    <property type="interactions" value="722"/>
</dbReference>
<dbReference type="IntAct" id="P12390">
    <property type="interactions" value="6"/>
</dbReference>
<dbReference type="STRING" id="10116.ENSRNOP00000028200"/>
<dbReference type="BindingDB" id="P12390"/>
<dbReference type="ChEMBL" id="CHEMBL3001"/>
<dbReference type="DrugCentral" id="P12390"/>
<dbReference type="GlyCosmos" id="P12390">
    <property type="glycosylation" value="2 sites, No reported glycans"/>
</dbReference>
<dbReference type="GlyGen" id="P12390">
    <property type="glycosylation" value="2 sites"/>
</dbReference>
<dbReference type="PhosphoSitePlus" id="P12390"/>
<dbReference type="SwissPalm" id="P12390"/>
<dbReference type="PaxDb" id="10116-ENSRNOP00000028200"/>
<dbReference type="Ensembl" id="ENSRNOT00000028200.4">
    <property type="protein sequence ID" value="ENSRNOP00000028200.2"/>
    <property type="gene ID" value="ENSRNOG00000020778.4"/>
</dbReference>
<dbReference type="GeneID" id="54239"/>
<dbReference type="KEGG" id="rno:54239"/>
<dbReference type="UCSC" id="RGD:2350">
    <property type="organism name" value="rat"/>
</dbReference>
<dbReference type="AGR" id="RGD:2350"/>
<dbReference type="CTD" id="1141"/>
<dbReference type="RGD" id="2350">
    <property type="gene designation" value="Chrnb2"/>
</dbReference>
<dbReference type="eggNOG" id="KOG3645">
    <property type="taxonomic scope" value="Eukaryota"/>
</dbReference>
<dbReference type="GeneTree" id="ENSGT00940000158417"/>
<dbReference type="HOGENOM" id="CLU_018074_1_3_1"/>
<dbReference type="InParanoid" id="P12390"/>
<dbReference type="OMA" id="MAWRSGP"/>
<dbReference type="OrthoDB" id="5975154at2759"/>
<dbReference type="PhylomeDB" id="P12390"/>
<dbReference type="TreeFam" id="TF315605"/>
<dbReference type="Reactome" id="R-RNO-629587">
    <property type="pathway name" value="Highly sodium permeable postsynaptic acetylcholine nicotinic receptors"/>
</dbReference>
<dbReference type="Reactome" id="R-RNO-629594">
    <property type="pathway name" value="Highly calcium permeable postsynaptic nicotinic acetylcholine receptors"/>
</dbReference>
<dbReference type="Reactome" id="R-RNO-629597">
    <property type="pathway name" value="Highly calcium permeable nicotinic acetylcholine receptors"/>
</dbReference>
<dbReference type="PRO" id="PR:P12390"/>
<dbReference type="Proteomes" id="UP000002494">
    <property type="component" value="Chromosome 2"/>
</dbReference>
<dbReference type="Bgee" id="ENSRNOG00000020778">
    <property type="expression patterns" value="Expressed in frontal cortex and 7 other cell types or tissues"/>
</dbReference>
<dbReference type="GO" id="GO:0005892">
    <property type="term" value="C:acetylcholine-gated channel complex"/>
    <property type="evidence" value="ECO:0000314"/>
    <property type="project" value="RGD"/>
</dbReference>
<dbReference type="GO" id="GO:0034703">
    <property type="term" value="C:cation channel complex"/>
    <property type="evidence" value="ECO:0000266"/>
    <property type="project" value="RGD"/>
</dbReference>
<dbReference type="GO" id="GO:0098981">
    <property type="term" value="C:cholinergic synapse"/>
    <property type="evidence" value="ECO:0000314"/>
    <property type="project" value="SynGO"/>
</dbReference>
<dbReference type="GO" id="GO:0098691">
    <property type="term" value="C:dopaminergic synapse"/>
    <property type="evidence" value="ECO:0000266"/>
    <property type="project" value="RGD"/>
</dbReference>
<dbReference type="GO" id="GO:0009897">
    <property type="term" value="C:external side of plasma membrane"/>
    <property type="evidence" value="ECO:0000266"/>
    <property type="project" value="RGD"/>
</dbReference>
<dbReference type="GO" id="GO:0043005">
    <property type="term" value="C:neuron projection"/>
    <property type="evidence" value="ECO:0000318"/>
    <property type="project" value="GO_Central"/>
</dbReference>
<dbReference type="GO" id="GO:0098878">
    <property type="term" value="C:neurotransmitter receptor complex"/>
    <property type="evidence" value="ECO:0000266"/>
    <property type="project" value="RGD"/>
</dbReference>
<dbReference type="GO" id="GO:0005886">
    <property type="term" value="C:plasma membrane"/>
    <property type="evidence" value="ECO:0000314"/>
    <property type="project" value="MGI"/>
</dbReference>
<dbReference type="GO" id="GO:0044853">
    <property type="term" value="C:plasma membrane raft"/>
    <property type="evidence" value="ECO:0000316"/>
    <property type="project" value="ARUK-UCL"/>
</dbReference>
<dbReference type="GO" id="GO:0099634">
    <property type="term" value="C:postsynaptic specialization membrane"/>
    <property type="evidence" value="ECO:0000314"/>
    <property type="project" value="SynGO"/>
</dbReference>
<dbReference type="GO" id="GO:0042734">
    <property type="term" value="C:presynaptic membrane"/>
    <property type="evidence" value="ECO:0000314"/>
    <property type="project" value="SynGO"/>
</dbReference>
<dbReference type="GO" id="GO:0032991">
    <property type="term" value="C:protein-containing complex"/>
    <property type="evidence" value="ECO:0000314"/>
    <property type="project" value="RGD"/>
</dbReference>
<dbReference type="GO" id="GO:0045202">
    <property type="term" value="C:synapse"/>
    <property type="evidence" value="ECO:0000318"/>
    <property type="project" value="GO_Central"/>
</dbReference>
<dbReference type="GO" id="GO:0042166">
    <property type="term" value="F:acetylcholine binding"/>
    <property type="evidence" value="ECO:0000314"/>
    <property type="project" value="RGD"/>
</dbReference>
<dbReference type="GO" id="GO:0015464">
    <property type="term" value="F:acetylcholine receptor activity"/>
    <property type="evidence" value="ECO:0000266"/>
    <property type="project" value="RGD"/>
</dbReference>
<dbReference type="GO" id="GO:0022848">
    <property type="term" value="F:acetylcholine-gated monoatomic cation-selective channel activity"/>
    <property type="evidence" value="ECO:0000314"/>
    <property type="project" value="RGD"/>
</dbReference>
<dbReference type="GO" id="GO:1901363">
    <property type="term" value="F:heterocyclic compound binding"/>
    <property type="evidence" value="ECO:0000314"/>
    <property type="project" value="RGD"/>
</dbReference>
<dbReference type="GO" id="GO:0044877">
    <property type="term" value="F:protein-containing complex binding"/>
    <property type="evidence" value="ECO:0000314"/>
    <property type="project" value="RGD"/>
</dbReference>
<dbReference type="GO" id="GO:0050997">
    <property type="term" value="F:quaternary ammonium group binding"/>
    <property type="evidence" value="ECO:0000314"/>
    <property type="project" value="RGD"/>
</dbReference>
<dbReference type="GO" id="GO:1904315">
    <property type="term" value="F:transmitter-gated monoatomic ion channel activity involved in regulation of postsynaptic membrane potential"/>
    <property type="evidence" value="ECO:0000314"/>
    <property type="project" value="SynGO"/>
</dbReference>
<dbReference type="GO" id="GO:0095500">
    <property type="term" value="P:acetylcholine receptor signaling pathway"/>
    <property type="evidence" value="ECO:0000316"/>
    <property type="project" value="ARUK-UCL"/>
</dbReference>
<dbReference type="GO" id="GO:0001508">
    <property type="term" value="P:action potential"/>
    <property type="evidence" value="ECO:0000266"/>
    <property type="project" value="RGD"/>
</dbReference>
<dbReference type="GO" id="GO:0008306">
    <property type="term" value="P:associative learning"/>
    <property type="evidence" value="ECO:0000266"/>
    <property type="project" value="RGD"/>
</dbReference>
<dbReference type="GO" id="GO:0042113">
    <property type="term" value="P:B cell activation"/>
    <property type="evidence" value="ECO:0000266"/>
    <property type="project" value="RGD"/>
</dbReference>
<dbReference type="GO" id="GO:0042100">
    <property type="term" value="P:B cell proliferation"/>
    <property type="evidence" value="ECO:0000266"/>
    <property type="project" value="RGD"/>
</dbReference>
<dbReference type="GO" id="GO:0035095">
    <property type="term" value="P:behavioral response to nicotine"/>
    <property type="evidence" value="ECO:0000266"/>
    <property type="project" value="RGD"/>
</dbReference>
<dbReference type="GO" id="GO:0006816">
    <property type="term" value="P:calcium ion transport"/>
    <property type="evidence" value="ECO:0000266"/>
    <property type="project" value="RGD"/>
</dbReference>
<dbReference type="GO" id="GO:0021955">
    <property type="term" value="P:central nervous system neuron axonogenesis"/>
    <property type="evidence" value="ECO:0000266"/>
    <property type="project" value="RGD"/>
</dbReference>
<dbReference type="GO" id="GO:0021952">
    <property type="term" value="P:central nervous system projection neuron axonogenesis"/>
    <property type="evidence" value="ECO:0000266"/>
    <property type="project" value="RGD"/>
</dbReference>
<dbReference type="GO" id="GO:0007268">
    <property type="term" value="P:chemical synaptic transmission"/>
    <property type="evidence" value="ECO:0000318"/>
    <property type="project" value="GO_Central"/>
</dbReference>
<dbReference type="GO" id="GO:0050890">
    <property type="term" value="P:cognition"/>
    <property type="evidence" value="ECO:0000266"/>
    <property type="project" value="RGD"/>
</dbReference>
<dbReference type="GO" id="GO:0001661">
    <property type="term" value="P:conditioned taste aversion"/>
    <property type="evidence" value="ECO:0000266"/>
    <property type="project" value="RGD"/>
</dbReference>
<dbReference type="GO" id="GO:0014046">
    <property type="term" value="P:dopamine secretion"/>
    <property type="evidence" value="ECO:0000266"/>
    <property type="project" value="RGD"/>
</dbReference>
<dbReference type="GO" id="GO:0051649">
    <property type="term" value="P:establishment of localization in cell"/>
    <property type="evidence" value="ECO:0000266"/>
    <property type="project" value="RGD"/>
</dbReference>
<dbReference type="GO" id="GO:0021771">
    <property type="term" value="P:lateral geniculate nucleus development"/>
    <property type="evidence" value="ECO:0000266"/>
    <property type="project" value="RGD"/>
</dbReference>
<dbReference type="GO" id="GO:0007612">
    <property type="term" value="P:learning"/>
    <property type="evidence" value="ECO:0000266"/>
    <property type="project" value="RGD"/>
</dbReference>
<dbReference type="GO" id="GO:0007626">
    <property type="term" value="P:locomotory behavior"/>
    <property type="evidence" value="ECO:0000266"/>
    <property type="project" value="RGD"/>
</dbReference>
<dbReference type="GO" id="GO:0051899">
    <property type="term" value="P:membrane depolarization"/>
    <property type="evidence" value="ECO:0000266"/>
    <property type="project" value="RGD"/>
</dbReference>
<dbReference type="GO" id="GO:0007613">
    <property type="term" value="P:memory"/>
    <property type="evidence" value="ECO:0000266"/>
    <property type="project" value="RGD"/>
</dbReference>
<dbReference type="GO" id="GO:0034220">
    <property type="term" value="P:monoatomic ion transmembrane transport"/>
    <property type="evidence" value="ECO:0000318"/>
    <property type="project" value="GO_Central"/>
</dbReference>
<dbReference type="GO" id="GO:1904456">
    <property type="term" value="P:negative regulation of neuronal action potential"/>
    <property type="evidence" value="ECO:0000266"/>
    <property type="project" value="RGD"/>
</dbReference>
<dbReference type="GO" id="GO:0050877">
    <property type="term" value="P:nervous system process"/>
    <property type="evidence" value="ECO:0000266"/>
    <property type="project" value="RGD"/>
</dbReference>
<dbReference type="GO" id="GO:0019228">
    <property type="term" value="P:neuronal action potential"/>
    <property type="evidence" value="ECO:0000266"/>
    <property type="project" value="RGD"/>
</dbReference>
<dbReference type="GO" id="GO:0021631">
    <property type="term" value="P:optic nerve morphogenesis"/>
    <property type="evidence" value="ECO:0000266"/>
    <property type="project" value="RGD"/>
</dbReference>
<dbReference type="GO" id="GO:0030890">
    <property type="term" value="P:positive regulation of B cell proliferation"/>
    <property type="evidence" value="ECO:0000266"/>
    <property type="project" value="RGD"/>
</dbReference>
<dbReference type="GO" id="GO:0033603">
    <property type="term" value="P:positive regulation of dopamine secretion"/>
    <property type="evidence" value="ECO:0000266"/>
    <property type="project" value="RGD"/>
</dbReference>
<dbReference type="GO" id="GO:0032226">
    <property type="term" value="P:positive regulation of synaptic transmission, dopaminergic"/>
    <property type="evidence" value="ECO:0000266"/>
    <property type="project" value="RGD"/>
</dbReference>
<dbReference type="GO" id="GO:0099171">
    <property type="term" value="P:presynaptic modulation of chemical synaptic transmission"/>
    <property type="evidence" value="ECO:0000266"/>
    <property type="project" value="RGD"/>
</dbReference>
<dbReference type="GO" id="GO:0045188">
    <property type="term" value="P:regulation of circadian sleep/wake cycle, non-REM sleep"/>
    <property type="evidence" value="ECO:0000266"/>
    <property type="project" value="RGD"/>
</dbReference>
<dbReference type="GO" id="GO:0042320">
    <property type="term" value="P:regulation of circadian sleep/wake cycle, REM sleep"/>
    <property type="evidence" value="ECO:0000266"/>
    <property type="project" value="RGD"/>
</dbReference>
<dbReference type="GO" id="GO:0048814">
    <property type="term" value="P:regulation of dendrite morphogenesis"/>
    <property type="evidence" value="ECO:0000266"/>
    <property type="project" value="RGD"/>
</dbReference>
<dbReference type="GO" id="GO:0042053">
    <property type="term" value="P:regulation of dopamine metabolic process"/>
    <property type="evidence" value="ECO:0000266"/>
    <property type="project" value="RGD"/>
</dbReference>
<dbReference type="GO" id="GO:0014059">
    <property type="term" value="P:regulation of dopamine secretion"/>
    <property type="evidence" value="ECO:0000266"/>
    <property type="project" value="RGD"/>
</dbReference>
<dbReference type="GO" id="GO:0042391">
    <property type="term" value="P:regulation of membrane potential"/>
    <property type="evidence" value="ECO:0000266"/>
    <property type="project" value="RGD"/>
</dbReference>
<dbReference type="GO" id="GO:0051963">
    <property type="term" value="P:regulation of synapse assembly"/>
    <property type="evidence" value="ECO:0000266"/>
    <property type="project" value="RGD"/>
</dbReference>
<dbReference type="GO" id="GO:0032225">
    <property type="term" value="P:regulation of synaptic transmission, dopaminergic"/>
    <property type="evidence" value="ECO:0000266"/>
    <property type="project" value="RGD"/>
</dbReference>
<dbReference type="GO" id="GO:1905144">
    <property type="term" value="P:response to acetylcholine"/>
    <property type="evidence" value="ECO:0000314"/>
    <property type="project" value="RGD"/>
</dbReference>
<dbReference type="GO" id="GO:0042220">
    <property type="term" value="P:response to cocaine"/>
    <property type="evidence" value="ECO:0000266"/>
    <property type="project" value="RGD"/>
</dbReference>
<dbReference type="GO" id="GO:0045471">
    <property type="term" value="P:response to ethanol"/>
    <property type="evidence" value="ECO:0000270"/>
    <property type="project" value="RGD"/>
</dbReference>
<dbReference type="GO" id="GO:0001666">
    <property type="term" value="P:response to hypoxia"/>
    <property type="evidence" value="ECO:0000266"/>
    <property type="project" value="RGD"/>
</dbReference>
<dbReference type="GO" id="GO:0035094">
    <property type="term" value="P:response to nicotine"/>
    <property type="evidence" value="ECO:0000315"/>
    <property type="project" value="RGD"/>
</dbReference>
<dbReference type="GO" id="GO:0019233">
    <property type="term" value="P:sensory perception of pain"/>
    <property type="evidence" value="ECO:0000266"/>
    <property type="project" value="RGD"/>
</dbReference>
<dbReference type="GO" id="GO:0007605">
    <property type="term" value="P:sensory perception of sound"/>
    <property type="evidence" value="ECO:0000266"/>
    <property type="project" value="RGD"/>
</dbReference>
<dbReference type="GO" id="GO:0007165">
    <property type="term" value="P:signal transduction"/>
    <property type="evidence" value="ECO:0000266"/>
    <property type="project" value="RGD"/>
</dbReference>
<dbReference type="GO" id="GO:0006939">
    <property type="term" value="P:smooth muscle contraction"/>
    <property type="evidence" value="ECO:0000266"/>
    <property type="project" value="RGD"/>
</dbReference>
<dbReference type="GO" id="GO:0035176">
    <property type="term" value="P:social behavior"/>
    <property type="evidence" value="ECO:0000266"/>
    <property type="project" value="RGD"/>
</dbReference>
<dbReference type="GO" id="GO:0060084">
    <property type="term" value="P:synaptic transmission involved in micturition"/>
    <property type="evidence" value="ECO:0000266"/>
    <property type="project" value="RGD"/>
</dbReference>
<dbReference type="GO" id="GO:0007271">
    <property type="term" value="P:synaptic transmission, cholinergic"/>
    <property type="evidence" value="ECO:0000315"/>
    <property type="project" value="RGD"/>
</dbReference>
<dbReference type="GO" id="GO:0021562">
    <property type="term" value="P:vestibulocochlear nerve development"/>
    <property type="evidence" value="ECO:0000266"/>
    <property type="project" value="RGD"/>
</dbReference>
<dbReference type="GO" id="GO:0008542">
    <property type="term" value="P:visual learning"/>
    <property type="evidence" value="ECO:0000266"/>
    <property type="project" value="RGD"/>
</dbReference>
<dbReference type="GO" id="GO:0007601">
    <property type="term" value="P:visual perception"/>
    <property type="evidence" value="ECO:0000266"/>
    <property type="project" value="RGD"/>
</dbReference>
<dbReference type="CDD" id="cd19025">
    <property type="entry name" value="LGIC_ECD_nAChR_B2"/>
    <property type="match status" value="1"/>
</dbReference>
<dbReference type="CDD" id="cd19064">
    <property type="entry name" value="LGIC_TM_nAChR"/>
    <property type="match status" value="1"/>
</dbReference>
<dbReference type="FunFam" id="1.20.58.390:FF:000028">
    <property type="entry name" value="Cholinergic receptor nicotinic beta 2 subunit"/>
    <property type="match status" value="1"/>
</dbReference>
<dbReference type="FunFam" id="2.70.170.10:FF:000006">
    <property type="entry name" value="Cholinergic receptor nicotinic beta 2 subunit"/>
    <property type="match status" value="1"/>
</dbReference>
<dbReference type="FunFam" id="1.20.58.390:FF:000008">
    <property type="entry name" value="Cholinergic receptor nicotinic beta 4 subunit"/>
    <property type="match status" value="1"/>
</dbReference>
<dbReference type="Gene3D" id="2.70.170.10">
    <property type="entry name" value="Neurotransmitter-gated ion-channel ligand-binding domain"/>
    <property type="match status" value="1"/>
</dbReference>
<dbReference type="Gene3D" id="1.20.58.390">
    <property type="entry name" value="Neurotransmitter-gated ion-channel transmembrane domain"/>
    <property type="match status" value="2"/>
</dbReference>
<dbReference type="InterPro" id="IPR006202">
    <property type="entry name" value="Neur_chan_lig-bd"/>
</dbReference>
<dbReference type="InterPro" id="IPR036734">
    <property type="entry name" value="Neur_chan_lig-bd_sf"/>
</dbReference>
<dbReference type="InterPro" id="IPR006201">
    <property type="entry name" value="Neur_channel"/>
</dbReference>
<dbReference type="InterPro" id="IPR036719">
    <property type="entry name" value="Neuro-gated_channel_TM_sf"/>
</dbReference>
<dbReference type="InterPro" id="IPR038050">
    <property type="entry name" value="Neuro_actylchol_rec"/>
</dbReference>
<dbReference type="InterPro" id="IPR006029">
    <property type="entry name" value="Neurotrans-gated_channel_TM"/>
</dbReference>
<dbReference type="InterPro" id="IPR018000">
    <property type="entry name" value="Neurotransmitter_ion_chnl_CS"/>
</dbReference>
<dbReference type="InterPro" id="IPR002394">
    <property type="entry name" value="Nicotinic_acetylcholine_rcpt"/>
</dbReference>
<dbReference type="NCBIfam" id="TIGR00860">
    <property type="entry name" value="LIC"/>
    <property type="match status" value="1"/>
</dbReference>
<dbReference type="PANTHER" id="PTHR18945">
    <property type="entry name" value="NEUROTRANSMITTER GATED ION CHANNEL"/>
    <property type="match status" value="1"/>
</dbReference>
<dbReference type="Pfam" id="PF02931">
    <property type="entry name" value="Neur_chan_LBD"/>
    <property type="match status" value="1"/>
</dbReference>
<dbReference type="Pfam" id="PF02932">
    <property type="entry name" value="Neur_chan_memb"/>
    <property type="match status" value="1"/>
</dbReference>
<dbReference type="PRINTS" id="PR00254">
    <property type="entry name" value="NICOTINICR"/>
</dbReference>
<dbReference type="PRINTS" id="PR00252">
    <property type="entry name" value="NRIONCHANNEL"/>
</dbReference>
<dbReference type="SUPFAM" id="SSF90112">
    <property type="entry name" value="Neurotransmitter-gated ion-channel transmembrane pore"/>
    <property type="match status" value="1"/>
</dbReference>
<dbReference type="SUPFAM" id="SSF63712">
    <property type="entry name" value="Nicotinic receptor ligand binding domain-like"/>
    <property type="match status" value="1"/>
</dbReference>
<dbReference type="PROSITE" id="PS00236">
    <property type="entry name" value="NEUROTR_ION_CHANNEL"/>
    <property type="match status" value="1"/>
</dbReference>
<gene>
    <name type="primary">Chrnb2</name>
    <name type="synonym">Acrb2</name>
</gene>
<evidence type="ECO:0000250" key="1">
    <source>
        <dbReference type="UniProtKB" id="P04758"/>
    </source>
</evidence>
<evidence type="ECO:0000250" key="2">
    <source>
        <dbReference type="UniProtKB" id="P17787"/>
    </source>
</evidence>
<evidence type="ECO:0000255" key="3"/>
<evidence type="ECO:0000269" key="4">
    <source>
    </source>
</evidence>
<evidence type="ECO:0000269" key="5">
    <source>
    </source>
</evidence>
<evidence type="ECO:0000269" key="6">
    <source>
    </source>
</evidence>
<evidence type="ECO:0000269" key="7">
    <source>
    </source>
</evidence>
<evidence type="ECO:0000269" key="8">
    <source>
    </source>
</evidence>
<evidence type="ECO:0000269" key="9">
    <source>
    </source>
</evidence>
<evidence type="ECO:0000305" key="10"/>
<evidence type="ECO:0000305" key="11">
    <source>
    </source>
</evidence>
<evidence type="ECO:0000305" key="12">
    <source>
    </source>
</evidence>
<proteinExistence type="evidence at protein level"/>
<keyword id="KW-1003">Cell membrane</keyword>
<keyword id="KW-1015">Disulfide bond</keyword>
<keyword id="KW-0325">Glycoprotein</keyword>
<keyword id="KW-0407">Ion channel</keyword>
<keyword id="KW-0406">Ion transport</keyword>
<keyword id="KW-1071">Ligand-gated ion channel</keyword>
<keyword id="KW-0472">Membrane</keyword>
<keyword id="KW-0675">Receptor</keyword>
<keyword id="KW-1185">Reference proteome</keyword>
<keyword id="KW-0732">Signal</keyword>
<keyword id="KW-0770">Synapse</keyword>
<keyword id="KW-0812">Transmembrane</keyword>
<keyword id="KW-1133">Transmembrane helix</keyword>
<keyword id="KW-0813">Transport</keyword>
<feature type="signal peptide" evidence="3">
    <location>
        <begin position="1"/>
        <end position="24"/>
    </location>
</feature>
<feature type="chain" id="PRO_0000000381" description="Neuronal acetylcholine receptor subunit beta-2">
    <location>
        <begin position="25"/>
        <end position="500"/>
    </location>
</feature>
<feature type="topological domain" description="Extracellular" evidence="3">
    <location>
        <begin position="25"/>
        <end position="237"/>
    </location>
</feature>
<feature type="transmembrane region" description="Helical" evidence="3">
    <location>
        <begin position="238"/>
        <end position="258"/>
    </location>
</feature>
<feature type="topological domain" description="Cytoplasmic" evidence="3">
    <location>
        <begin position="259"/>
        <end position="266"/>
    </location>
</feature>
<feature type="transmembrane region" description="Helical" evidence="3">
    <location>
        <begin position="267"/>
        <end position="287"/>
    </location>
</feature>
<feature type="topological domain" description="Extracellular" evidence="3">
    <location>
        <begin position="288"/>
        <end position="299"/>
    </location>
</feature>
<feature type="transmembrane region" description="Helical" evidence="3">
    <location>
        <begin position="300"/>
        <end position="320"/>
    </location>
</feature>
<feature type="topological domain" description="Cytoplasmic" evidence="3">
    <location>
        <begin position="321"/>
        <end position="458"/>
    </location>
</feature>
<feature type="transmembrane region" description="Helical" evidence="3">
    <location>
        <begin position="459"/>
        <end position="479"/>
    </location>
</feature>
<feature type="site" description="Key residue that may interfere with effective access of the conotoxin BuIA to the channel binding site" evidence="12">
    <location>
        <position position="83"/>
    </location>
</feature>
<feature type="site" description="Key residue that may play an important stabilizing role for the interaction with alpha-conotoxins PnIA, GID and MII, allowing them to bind deep into the nAChR cleft" evidence="11">
    <location>
        <position position="118"/>
    </location>
</feature>
<feature type="site" description="Key residue for a rapid dissociation (K(off)) from the conotoxin BuIA" evidence="12">
    <location>
        <position position="135"/>
    </location>
</feature>
<feature type="site" description="Key residue for a rapid dissociation (K(off)) from the conotoxin BuIA" evidence="12">
    <location>
        <position position="143"/>
    </location>
</feature>
<feature type="glycosylation site" description="N-linked (GlcNAc...) asparagine" evidence="3">
    <location>
        <position position="50"/>
    </location>
</feature>
<feature type="glycosylation site" description="N-linked (GlcNAc...) asparagine" evidence="3">
    <location>
        <position position="167"/>
    </location>
</feature>
<feature type="disulfide bond" evidence="2">
    <location>
        <begin position="154"/>
        <end position="168"/>
    </location>
</feature>
<feature type="mutagenesis site" description="9-fold increase in affinity to the conotoxin BuIA (15-fold decrease in K(off))." evidence="7">
    <original>T</original>
    <variation>D</variation>
    <location>
        <position position="83"/>
    </location>
</feature>
<feature type="mutagenesis site" description="12-fold increase in affinity to the conotoxin BuIA (11-fold decrease in K(off))." evidence="7">
    <original>T</original>
    <variation>G</variation>
    <location>
        <position position="83"/>
    </location>
</feature>
<feature type="mutagenesis site" description="20-fold increase in affinity to the conotoxin BuIA (37-fold decrease in K(off)); 2-fold decrease in affinity to the conotoxin MII (no change in K(off), but 2-fold decrease in K(on))." evidence="7">
    <original>T</original>
    <variation>K</variation>
    <location>
        <position position="83"/>
    </location>
</feature>
<feature type="mutagenesis site" description="19-fold increase in affinity to the conotoxin BuIA (7-fold decrease in K(off))." evidence="7">
    <original>T</original>
    <variation>S</variation>
    <location>
        <position position="83"/>
    </location>
</feature>
<feature type="mutagenesis site" description="3-fold increase in affinity to the conotoxin BuIA (2-fold decrease in K(off))." evidence="7">
    <original>T</original>
    <variation>V</variation>
    <location>
        <position position="83"/>
    </location>
</feature>
<feature type="mutagenesis site" description="40-fold, 165-fold, and 300-fold decrease in inhibition of alpha-3-beta-2(L118Q) nAChR by alpha-conotoxins PnIA, GID and MII, respectively." evidence="6">
    <original>L</original>
    <variation>Q</variation>
    <location>
        <position position="118"/>
    </location>
</feature>
<feature type="mutagenesis site" description="Very small decrease or no change in inhibition of alpha-3-beta-2(V135A) nAChR by alpha-conotoxins PnIA, GID and MII." evidence="6">
    <original>V</original>
    <variation>A</variation>
    <location>
        <position position="135"/>
    </location>
</feature>
<feature type="mutagenesis site" description="No change in inhibition of alpha-3-beta-2(V135G) nAChR by alpha-conotoxins GID and MII. 4.4-fold decrease in inhibition of alpha-3-beta-2(V135G) nAChR by alpha-conotoxins PnIA." evidence="6">
    <original>V</original>
    <variation>G</variation>
    <location>
        <position position="135"/>
    </location>
</feature>
<feature type="mutagenesis site" description="8.3-fold decrease in affinity to the conotoxin BuIA (4-fold increase in K(off) and a 2-fold decrease in K(on))." evidence="7">
    <original>V</original>
    <variation>I</variation>
    <location>
        <position position="135"/>
    </location>
</feature>
<feature type="mutagenesis site" description="No change in inhibition of alpha-3-beta-2(F143A) nAChR by alpha-conotoxins PnIA, GID and MII. 12-fold and 6.6-fold increase in inhibition of alpha-4-beta-2(F143A) nAChR by alpha-conotoxins GID and MII, respectively, but no change in inhibition of the same receptor by alpha-conotoxin PnIA." evidence="6">
    <original>F</original>
    <variation>A</variation>
    <location>
        <position position="143"/>
    </location>
</feature>
<feature type="mutagenesis site" description="6.6-fold increase in affinity to the conotoxin BuIA (7-fold decrease in K(off))." evidence="7">
    <original>F</original>
    <variation>Q</variation>
    <location>
        <position position="143"/>
    </location>
</feature>
<name>ACHB2_RAT</name>
<sequence length="500" mass="56909">MAGHSNSMALFSFSLLWLCSGVLGTDTEERLVEHLLDPSRYNKLIRPATNGSELVTVQLMVSLAQLISVHEREQIMTTNVWLTQEWEDYRLTWKPEDFDNMKKVRLPSKHIWLPDVVLYNNADGMYEVSFYSNAVVSYDGSIFWLPPAIYKSACKIEVKHFPFDQQNCTMKFRSWTYDRTEIDLVLKSDVASLDDFTPSGEWDIIALPGRRNENPDDSTYVDITYDFIIRRKPLFYTINLIIPCVLITSLAILVFYLPSDCGEKMTLCISVLLALTVFLLLISKIVPPTSLDVPLVGKYLMFTMVLVTFSIVTSVCVLNVHHRSPTTHTMAPWVKVVFLEKLPTLLFLQQPRHRCARQRLRLRRRQREREGAGALFFREGPAADPCTCFVNPASVQGLAGAFRAEPTAAGPGRSVGPCSCGLREAVDGVRFIADHMRSEDDDQSVREDWKYVAMVIDRLFLWIFVFVCVFGTVGMFLQPLFQNYTATTFLHPDHSAPSSK</sequence>
<reference key="1">
    <citation type="journal article" date="1988" name="Neuron">
        <title>Primary structure and expression of beta 2: a novel subunit of neuronal nicotinic acetylcholine receptors.</title>
        <authorList>
            <person name="Deneris E.S."/>
            <person name="Connolly J.G."/>
            <person name="Boulter J."/>
            <person name="Wada E."/>
            <person name="Wada K."/>
            <person name="Swanson L.W."/>
            <person name="Patrick J."/>
            <person name="Heinemann S.F."/>
        </authorList>
    </citation>
    <scope>NUCLEOTIDE SEQUENCE [MRNA]</scope>
</reference>
<reference key="2">
    <citation type="journal article" date="1987" name="Proc. Natl. Acad. Sci. U.S.A.">
        <title>Functional expression of two neuronal nicotinic acetylcholine receptors from cDNA clones identifies a gene family.</title>
        <authorList>
            <person name="Boulter J."/>
            <person name="Connolly J.G."/>
            <person name="Deneris E.S."/>
            <person name="Goldman D.J."/>
            <person name="Heinemann S.F."/>
            <person name="Patrick J."/>
        </authorList>
    </citation>
    <scope>NUCLEOTIDE SEQUENCE [MRNA]</scope>
</reference>
<reference key="3">
    <citation type="submission" date="1998-11" db="EMBL/GenBank/DDBJ databases">
        <authorList>
            <person name="Hartley M."/>
        </authorList>
    </citation>
    <scope>SEQUENCE REVISION</scope>
</reference>
<reference key="4">
    <citation type="submission" date="2004-03" db="EMBL/GenBank/DDBJ databases">
        <authorList>
            <person name="Groot-Kormelink P.J."/>
        </authorList>
    </citation>
    <scope>NUCLEOTIDE SEQUENCE [MRNA]</scope>
    <source>
        <strain>Sprague-Dawley</strain>
        <tissue>Brain</tissue>
    </source>
</reference>
<reference key="5">
    <citation type="journal article" date="1999" name="Mol. Pharmacol.">
        <title>Ligand binding and activation of rat nicotinic alpha4beta2 receptors stably expressed in HEK293 cells.</title>
        <authorList>
            <person name="Sabey K."/>
            <person name="Paradiso K."/>
            <person name="Zhang J."/>
            <person name="Steinbach J.H."/>
        </authorList>
    </citation>
    <scope>FUNCTION</scope>
    <scope>CATALYTIC ACTIVITY</scope>
    <scope>SUBUNIT</scope>
    <scope>ACTIVITY REGULATION</scope>
</reference>
<reference key="6">
    <citation type="journal article" date="1999" name="Neuropharmacology">
        <title>Alpha3beta4 subunit-containing nicotinic receptors dominate function in rat medial habenula neurons.</title>
        <authorList>
            <person name="Quick M.W."/>
            <person name="Ceballos R.M."/>
            <person name="Kasten M."/>
            <person name="McIntosh J.M."/>
            <person name="Lester R.A."/>
        </authorList>
    </citation>
    <scope>ACTIVITY REGULATION</scope>
    <scope>FUNCTION</scope>
    <scope>SUBUNIT</scope>
</reference>
<reference key="7">
    <citation type="journal article" date="2004" name="Biochemistry">
        <title>Alpha-conotoxins ImI and ImII target distinct regions of the human alpha7 nicotinic acetylcholine receptor and distinguish human nicotinic receptor subtypes.</title>
        <authorList>
            <person name="Ellison M."/>
            <person name="Gao F."/>
            <person name="Wang H.L."/>
            <person name="Sine S.M."/>
            <person name="McIntosh J.M."/>
            <person name="Olivera B.M."/>
        </authorList>
    </citation>
    <scope>FUNCTION</scope>
    <scope>SYNTHESIS OF 5-16</scope>
    <scope>3D-STRUCTURE MODELING</scope>
    <scope>SUBUNIT</scope>
    <scope>ACTIVITY REGULATION</scope>
</reference>
<reference key="8">
    <citation type="journal article" date="2005" name="J. Biol. Chem.">
        <title>Beta2 subunit contribution to 4/7 alpha-conotoxin binding to the nicotinic acetylcholine receptor.</title>
        <authorList>
            <person name="Dutertre S."/>
            <person name="Nicke A."/>
            <person name="Lewis R.J."/>
        </authorList>
    </citation>
    <scope>SUBUNIT</scope>
    <scope>MUTAGENESIS OF LEU-118; VAL-135 AND PHE-143</scope>
    <scope>ACTIVITY REGULATION</scope>
</reference>
<reference key="9">
    <citation type="journal article" date="2006" name="Biochemistry">
        <title>Determinants of alpha-conotoxin BuIA selectivity on the nicotinic acetylcholine receptor beta subunit.</title>
        <authorList>
            <person name="Shiembob D.L."/>
            <person name="Roberts R.L."/>
            <person name="Luetje C.W."/>
            <person name="McIntosh J.M."/>
        </authorList>
    </citation>
    <scope>SUBUNIT</scope>
    <scope>MUTAGENESIS OF THR-83; VAL-135 AND PHE-143</scope>
    <scope>SITES THR-83; VAL-135 AND PHE-143</scope>
    <scope>ACTIVITY REGULATION</scope>
</reference>
<reference key="10">
    <citation type="journal article" date="2011" name="J. Neurosci.">
        <title>Functional nicotinic acetylcholine receptors containing alpha6 subunits are on GABAergic neuronal boutons adherent to ventral tegmental area dopamine neurons.</title>
        <authorList>
            <person name="Yang K."/>
            <person name="Buhlman L."/>
            <person name="Khan G.M."/>
            <person name="Nichols R.A."/>
            <person name="Jin G."/>
            <person name="McIntosh J.M."/>
            <person name="Whiteaker P."/>
            <person name="Lukas R.J."/>
            <person name="Wu J."/>
        </authorList>
    </citation>
    <scope>FUNCTION</scope>
    <scope>ACTIVITY REGULATION</scope>
    <scope>SUBCELLULAR LOCATION</scope>
    <scope>CATALYTIC ACTIVITY</scope>
</reference>
<protein>
    <recommendedName>
        <fullName>Neuronal acetylcholine receptor subunit beta-2</fullName>
    </recommendedName>
    <alternativeName>
        <fullName>Neuronal acetylcholine receptor non-alpha-1 chain</fullName>
        <shortName>N-alpha 1</shortName>
    </alternativeName>
</protein>
<comment type="function">
    <text evidence="2 4 8">Component of neuronal acetylcholine receptors (nAChRs) that function as pentameric, ligand-gated cation channels with high calcium permeability among other activities. nAChRs are excitatory neurotrasnmitter receptors formed by a collection of nAChR subunits known to mediate synaptic transmission in the nervous system and the neuromuscular junction. Each nAchR subunit confers differential attributes to channel properties, including activation, deactivation and desensitization kinetics, pH sensitivity, cation permeability, and binding to allosteric modulators (PubMed:10465681). CHRNB2 forms heteropentameric neuronal acetylcholine receptors with CHRNA2, CHRNA3, CHRNA4 and CHRNA6, as well as CHRNA5 and CHRNB3 as accesory subunits (PubMed:10465681). Found in two major stoichiometric forms,(CHRNA4)3:(CHRNB2)2 and (CHRNA4)2:(CHRNB2)3, the two stoichiometric forms differ in their unitary conductance, calcium permeability, ACh sensitivity and potentiation by divalent cation (By similarity). Heteropentameric channels with CHRNA6 and CHRNA4 exhibit high sensitivity to ACh and nicotine and are predominantly expressed in only a few brain areas, including dopaminergic neurons, norepirephrine neurons and cells of the visual system. nAChrs containing CHRNA6 subunits mediate endogenous cholinergic modulation of dopamine and gamma-aminobutyric acid (GABA) release in response to nicotine at nerve terminals (PubMed:21325521). Also forms functional nAChRs with other subunits such as CHRNA7:CHRNB2, mainly expressed in basal forebrain cholinergic neurons (By similarity).</text>
</comment>
<comment type="catalytic activity">
    <reaction evidence="9">
        <text>Ca(2+)(in) = Ca(2+)(out)</text>
        <dbReference type="Rhea" id="RHEA:29671"/>
        <dbReference type="ChEBI" id="CHEBI:29108"/>
    </reaction>
</comment>
<comment type="catalytic activity">
    <reaction evidence="1">
        <text>K(+)(in) = K(+)(out)</text>
        <dbReference type="Rhea" id="RHEA:29463"/>
        <dbReference type="ChEBI" id="CHEBI:29103"/>
    </reaction>
</comment>
<comment type="catalytic activity">
    <reaction evidence="2">
        <text>Na(+)(in) = Na(+)(out)</text>
        <dbReference type="Rhea" id="RHEA:34963"/>
        <dbReference type="ChEBI" id="CHEBI:29101"/>
    </reaction>
</comment>
<comment type="activity regulation">
    <text evidence="2 4 5 6 7 9">Activated by a myriad of ligands such as acetylcholine, cytisine, nicotine, choline and epibatidine (PubMed:10465681, PubMed:9882698). Channel potentiation by calcium is stoichiometry-selective, CHRNA4:CHRNB2 nACh receptor is achieved by calcium association with topographically distinct sites framed by anionic residues within the CHRNA4 subunit and between the CHRNA4 and CHRNB2 subunits. Oligomeric amyloid-beta protein 42 activates specifially CHRNA7:CHRNB2 nAchRs (By similarity). nAChR activity is inhibited by the antagonist alpha-conotoxins BuIA, PnIA, PnIC, GID and MII, small disulfide-constrained peptides from cone snails (PubMed:10465681, PubMed:15609996, PubMed:15929983, PubMed:16964981).</text>
</comment>
<comment type="subunit">
    <text evidence="2 4 5 6">Neuronal AChR is a heteropentamer composed of two different types of subunits: alpha and beta. CHRNB2/Beta-2 subunit can be combined to CHRNA2/alpha-2, CHRNA3/alpha-3 or CHRNA4/alpha-4, CHRNA5/alpha-5, CHRNA6/alpha-6 and CHRNB3/beta-3 to give rise to functional receptors (PubMed:10465681). CHRNA2:CHRNB2 and CHRNA4:CHRNB2 nAChR complexes exist in two subtypes: LS (low agonist sensitivity) with a (CHRNA2/4)3:(CHRNB2)2 and HS (high agonist sensitivity) with a (CHRNA2/4)2:(CHRNB2)3 stoichiometry; the subtypes differ in their subunit binding interfaces which are involved in ligand binding. Cells produce predominantly an (CHRNA4)3:(CHRNB2)2 nAChR. The stoichiometric form (CHRNA4)2:(CHRNB2)3 expression is selectively up-regulated by nicotine and has lower single channel conductance and calcium permeability. Also part of the stoichiometric forms: (CHRNA4:CHRNB2)2:CHRNB3 or (CHRNA6:CHRNB2)2:CHRNB3 (By similarity). Can form heteropentamers with CHRNA7, mainly found in basal forebrain cholinergic neurons. Interacts with RIC3; which is required for proper folding and assembly (PubMed:15609996, PubMed:15929983). Interacts with LYPD6 (By similarity).</text>
</comment>
<comment type="interaction">
    <interactant intactId="EBI-9008812">
        <id>P12390</id>
    </interactant>
    <interactant intactId="EBI-7842410">
        <id>P09483</id>
        <label>Chrna4</label>
    </interactant>
    <organismsDiffer>false</organismsDiffer>
    <experiments>6</experiments>
</comment>
<comment type="subcellular location">
    <subcellularLocation>
        <location evidence="8">Synaptic cell membrane</location>
        <topology evidence="3">Multi-pass membrane protein</topology>
    </subcellularLocation>
    <subcellularLocation>
        <location evidence="2">Cell membrane</location>
        <topology evidence="3">Multi-pass membrane protein</topology>
    </subcellularLocation>
</comment>
<comment type="tissue specificity">
    <text>Expressed in most regions of the CNS.</text>
</comment>
<comment type="similarity">
    <text evidence="10">Belongs to the ligand-gated ion channel (TC 1.A.9) family. Acetylcholine receptor (TC 1.A.9.1) subfamily. Beta-2/CHRNB2 sub-subfamily.</text>
</comment>
<accession>P12390</accession>
<accession>Q53YK1</accession>